<accession>C1EPN0</accession>
<proteinExistence type="inferred from homology"/>
<comment type="function">
    <text evidence="1">Catalyzes the deamination of 5-methylthioadenosine and S-adenosyl-L-homocysteine into 5-methylthioinosine and S-inosyl-L-homocysteine, respectively. Is also able to deaminate adenosine.</text>
</comment>
<comment type="catalytic activity">
    <reaction evidence="1">
        <text>S-adenosyl-L-homocysteine + H2O + H(+) = S-inosyl-L-homocysteine + NH4(+)</text>
        <dbReference type="Rhea" id="RHEA:20716"/>
        <dbReference type="ChEBI" id="CHEBI:15377"/>
        <dbReference type="ChEBI" id="CHEBI:15378"/>
        <dbReference type="ChEBI" id="CHEBI:28938"/>
        <dbReference type="ChEBI" id="CHEBI:57856"/>
        <dbReference type="ChEBI" id="CHEBI:57985"/>
        <dbReference type="EC" id="3.5.4.28"/>
    </reaction>
</comment>
<comment type="catalytic activity">
    <reaction evidence="1">
        <text>S-methyl-5'-thioadenosine + H2O + H(+) = S-methyl-5'-thioinosine + NH4(+)</text>
        <dbReference type="Rhea" id="RHEA:25025"/>
        <dbReference type="ChEBI" id="CHEBI:15377"/>
        <dbReference type="ChEBI" id="CHEBI:15378"/>
        <dbReference type="ChEBI" id="CHEBI:17509"/>
        <dbReference type="ChEBI" id="CHEBI:28938"/>
        <dbReference type="ChEBI" id="CHEBI:48595"/>
        <dbReference type="EC" id="3.5.4.31"/>
    </reaction>
</comment>
<comment type="cofactor">
    <cofactor evidence="1">
        <name>Zn(2+)</name>
        <dbReference type="ChEBI" id="CHEBI:29105"/>
    </cofactor>
    <text evidence="1">Binds 1 zinc ion per subunit.</text>
</comment>
<comment type="similarity">
    <text evidence="1">Belongs to the metallo-dependent hydrolases superfamily. MTA/SAH deaminase family.</text>
</comment>
<organism>
    <name type="scientific">Bacillus cereus (strain 03BB102)</name>
    <dbReference type="NCBI Taxonomy" id="572264"/>
    <lineage>
        <taxon>Bacteria</taxon>
        <taxon>Bacillati</taxon>
        <taxon>Bacillota</taxon>
        <taxon>Bacilli</taxon>
        <taxon>Bacillales</taxon>
        <taxon>Bacillaceae</taxon>
        <taxon>Bacillus</taxon>
        <taxon>Bacillus cereus group</taxon>
    </lineage>
</organism>
<protein>
    <recommendedName>
        <fullName evidence="1">5-methylthioadenosine/S-adenosylhomocysteine deaminase</fullName>
        <shortName evidence="1">MTA/SAH deaminase</shortName>
        <ecNumber evidence="1">3.5.4.28</ecNumber>
        <ecNumber evidence="1">3.5.4.31</ecNumber>
    </recommendedName>
</protein>
<gene>
    <name evidence="1" type="primary">mtaD</name>
    <name type="ordered locus">BCA_1873</name>
</gene>
<name>MTAD_BACC3</name>
<sequence length="435" mass="48077">MKTTYVNATIVTMNEQNEVIENGYIIVENDKIIDVNSGEFASDFEVDEVIDMKGKWVLPGLVNTHTHVVMSLLRGIGDDMLLQPWLETRIWPLESQFTSQIAVASTELGLLEMVKSGTTSFSDMFNPIGVDQDAIMETVSRSGMRAAVSRTLFSFGTKEDEKKAIEEAEKYVKRYYNESGMLTTMVAPHSPYTCSTELLEECARIAVENQTMVHIHLSETEREVRDIEAQYGKRPVEYAASCGLFKRSTVIAHGVVLNDNERAFLAEHDVRVAHNPNSNLKLGSGIANVKAMLEAGIKVGIATDSVASNNNLDMFEEMRIATLLQKGIHQDATALPVETALTLATKGAAEVIGMKQTGSLEVGKCADFITIDPSNKPHLQPADEVLSHLVYAASGKDISDVIINGKRVVWNGECKTLDEERIIFEASRYKRGLQR</sequence>
<keyword id="KW-0378">Hydrolase</keyword>
<keyword id="KW-0479">Metal-binding</keyword>
<keyword id="KW-0862">Zinc</keyword>
<dbReference type="EC" id="3.5.4.28" evidence="1"/>
<dbReference type="EC" id="3.5.4.31" evidence="1"/>
<dbReference type="EMBL" id="CP001407">
    <property type="protein sequence ID" value="ACO28993.1"/>
    <property type="molecule type" value="Genomic_DNA"/>
</dbReference>
<dbReference type="SMR" id="C1EPN0"/>
<dbReference type="KEGG" id="bcx:BCA_1873"/>
<dbReference type="Proteomes" id="UP000002210">
    <property type="component" value="Chromosome"/>
</dbReference>
<dbReference type="GO" id="GO:0090614">
    <property type="term" value="F:5'-methylthioadenosine deaminase activity"/>
    <property type="evidence" value="ECO:0007669"/>
    <property type="project" value="UniProtKB-UniRule"/>
</dbReference>
<dbReference type="GO" id="GO:0046872">
    <property type="term" value="F:metal ion binding"/>
    <property type="evidence" value="ECO:0007669"/>
    <property type="project" value="UniProtKB-KW"/>
</dbReference>
<dbReference type="GO" id="GO:0050270">
    <property type="term" value="F:S-adenosylhomocysteine deaminase activity"/>
    <property type="evidence" value="ECO:0007669"/>
    <property type="project" value="UniProtKB-UniRule"/>
</dbReference>
<dbReference type="CDD" id="cd01298">
    <property type="entry name" value="ATZ_TRZ_like"/>
    <property type="match status" value="1"/>
</dbReference>
<dbReference type="FunFam" id="3.20.20.140:FF:000014">
    <property type="entry name" value="5-methylthioadenosine/S-adenosylhomocysteine deaminase"/>
    <property type="match status" value="1"/>
</dbReference>
<dbReference type="Gene3D" id="3.20.20.140">
    <property type="entry name" value="Metal-dependent hydrolases"/>
    <property type="match status" value="1"/>
</dbReference>
<dbReference type="Gene3D" id="2.30.40.10">
    <property type="entry name" value="Urease, subunit C, domain 1"/>
    <property type="match status" value="1"/>
</dbReference>
<dbReference type="HAMAP" id="MF_01281">
    <property type="entry name" value="MTA_SAH_deamin"/>
    <property type="match status" value="1"/>
</dbReference>
<dbReference type="InterPro" id="IPR006680">
    <property type="entry name" value="Amidohydro-rel"/>
</dbReference>
<dbReference type="InterPro" id="IPR023512">
    <property type="entry name" value="Deaminase_MtaD/DadD"/>
</dbReference>
<dbReference type="InterPro" id="IPR011059">
    <property type="entry name" value="Metal-dep_hydrolase_composite"/>
</dbReference>
<dbReference type="InterPro" id="IPR032466">
    <property type="entry name" value="Metal_Hydrolase"/>
</dbReference>
<dbReference type="InterPro" id="IPR050287">
    <property type="entry name" value="MTA/SAH_deaminase"/>
</dbReference>
<dbReference type="NCBIfam" id="NF012037">
    <property type="entry name" value="PRK15493.1"/>
    <property type="match status" value="1"/>
</dbReference>
<dbReference type="PANTHER" id="PTHR43794:SF11">
    <property type="entry name" value="AMIDOHYDROLASE-RELATED DOMAIN-CONTAINING PROTEIN"/>
    <property type="match status" value="1"/>
</dbReference>
<dbReference type="PANTHER" id="PTHR43794">
    <property type="entry name" value="AMINOHYDROLASE SSNA-RELATED"/>
    <property type="match status" value="1"/>
</dbReference>
<dbReference type="Pfam" id="PF01979">
    <property type="entry name" value="Amidohydro_1"/>
    <property type="match status" value="1"/>
</dbReference>
<dbReference type="SUPFAM" id="SSF51338">
    <property type="entry name" value="Composite domain of metallo-dependent hydrolases"/>
    <property type="match status" value="1"/>
</dbReference>
<dbReference type="SUPFAM" id="SSF51556">
    <property type="entry name" value="Metallo-dependent hydrolases"/>
    <property type="match status" value="1"/>
</dbReference>
<feature type="chain" id="PRO_1000165238" description="5-methylthioadenosine/S-adenosylhomocysteine deaminase">
    <location>
        <begin position="1"/>
        <end position="435"/>
    </location>
</feature>
<feature type="binding site" evidence="1">
    <location>
        <position position="65"/>
    </location>
    <ligand>
        <name>Zn(2+)</name>
        <dbReference type="ChEBI" id="CHEBI:29105"/>
    </ligand>
</feature>
<feature type="binding site" evidence="1">
    <location>
        <position position="67"/>
    </location>
    <ligand>
        <name>Zn(2+)</name>
        <dbReference type="ChEBI" id="CHEBI:29105"/>
    </ligand>
</feature>
<feature type="binding site" evidence="1">
    <location>
        <position position="94"/>
    </location>
    <ligand>
        <name>substrate</name>
    </ligand>
</feature>
<feature type="binding site" evidence="1">
    <location>
        <position position="150"/>
    </location>
    <ligand>
        <name>substrate</name>
    </ligand>
</feature>
<feature type="binding site" evidence="1">
    <location>
        <position position="189"/>
    </location>
    <ligand>
        <name>substrate</name>
    </ligand>
</feature>
<feature type="binding site" evidence="1">
    <location>
        <position position="216"/>
    </location>
    <ligand>
        <name>Zn(2+)</name>
        <dbReference type="ChEBI" id="CHEBI:29105"/>
    </ligand>
</feature>
<feature type="binding site" evidence="1">
    <location>
        <position position="219"/>
    </location>
    <ligand>
        <name>substrate</name>
    </ligand>
</feature>
<feature type="binding site" evidence="1">
    <location>
        <position position="304"/>
    </location>
    <ligand>
        <name>substrate</name>
    </ligand>
</feature>
<feature type="binding site" evidence="1">
    <location>
        <position position="304"/>
    </location>
    <ligand>
        <name>Zn(2+)</name>
        <dbReference type="ChEBI" id="CHEBI:29105"/>
    </ligand>
</feature>
<evidence type="ECO:0000255" key="1">
    <source>
        <dbReference type="HAMAP-Rule" id="MF_01281"/>
    </source>
</evidence>
<reference key="1">
    <citation type="submission" date="2009-02" db="EMBL/GenBank/DDBJ databases">
        <title>Genome sequence of Bacillus cereus 03BB102.</title>
        <authorList>
            <person name="Dodson R.J."/>
            <person name="Jackson P."/>
            <person name="Munk A.C."/>
            <person name="Brettin T."/>
            <person name="Bruce D."/>
            <person name="Detter C."/>
            <person name="Tapia R."/>
            <person name="Han C."/>
            <person name="Sutton G."/>
            <person name="Sims D."/>
        </authorList>
    </citation>
    <scope>NUCLEOTIDE SEQUENCE [LARGE SCALE GENOMIC DNA]</scope>
    <source>
        <strain>03BB102</strain>
    </source>
</reference>